<proteinExistence type="inferred from homology"/>
<organism>
    <name type="scientific">Arthrobacter sp. (strain FB24)</name>
    <dbReference type="NCBI Taxonomy" id="290399"/>
    <lineage>
        <taxon>Bacteria</taxon>
        <taxon>Bacillati</taxon>
        <taxon>Actinomycetota</taxon>
        <taxon>Actinomycetes</taxon>
        <taxon>Micrococcales</taxon>
        <taxon>Micrococcaceae</taxon>
        <taxon>Arthrobacter</taxon>
    </lineage>
</organism>
<comment type="function">
    <text evidence="1">Involved in the oxidation of myo-inositol (MI) to 2-keto-myo-inositol (2KMI or 2-inosose).</text>
</comment>
<comment type="catalytic activity">
    <reaction evidence="1">
        <text>myo-inositol + NAD(+) = scyllo-inosose + NADH + H(+)</text>
        <dbReference type="Rhea" id="RHEA:16949"/>
        <dbReference type="ChEBI" id="CHEBI:15378"/>
        <dbReference type="ChEBI" id="CHEBI:17268"/>
        <dbReference type="ChEBI" id="CHEBI:17811"/>
        <dbReference type="ChEBI" id="CHEBI:57540"/>
        <dbReference type="ChEBI" id="CHEBI:57945"/>
        <dbReference type="EC" id="1.1.1.18"/>
    </reaction>
</comment>
<comment type="subunit">
    <text evidence="1">Homotetramer.</text>
</comment>
<comment type="similarity">
    <text evidence="1">Belongs to the Gfo/Idh/MocA family.</text>
</comment>
<feature type="chain" id="PRO_0000352553" description="Inositol 2-dehydrogenase">
    <location>
        <begin position="1"/>
        <end position="337"/>
    </location>
</feature>
<evidence type="ECO:0000255" key="1">
    <source>
        <dbReference type="HAMAP-Rule" id="MF_01671"/>
    </source>
</evidence>
<gene>
    <name evidence="1" type="primary">iolG</name>
    <name type="ordered locus">Arth_0825</name>
</gene>
<accession>A0JT53</accession>
<dbReference type="EC" id="1.1.1.18" evidence="1"/>
<dbReference type="EMBL" id="CP000454">
    <property type="protein sequence ID" value="ABK02223.1"/>
    <property type="molecule type" value="Genomic_DNA"/>
</dbReference>
<dbReference type="RefSeq" id="WP_011690690.1">
    <property type="nucleotide sequence ID" value="NC_008541.1"/>
</dbReference>
<dbReference type="SMR" id="A0JT53"/>
<dbReference type="STRING" id="290399.Arth_0825"/>
<dbReference type="KEGG" id="art:Arth_0825"/>
<dbReference type="eggNOG" id="COG0673">
    <property type="taxonomic scope" value="Bacteria"/>
</dbReference>
<dbReference type="HOGENOM" id="CLU_023194_0_1_11"/>
<dbReference type="OrthoDB" id="256869at2"/>
<dbReference type="Proteomes" id="UP000000754">
    <property type="component" value="Chromosome"/>
</dbReference>
<dbReference type="GO" id="GO:0050112">
    <property type="term" value="F:inositol 2-dehydrogenase (NAD+) activity"/>
    <property type="evidence" value="ECO:0007669"/>
    <property type="project" value="UniProtKB-UniRule"/>
</dbReference>
<dbReference type="GO" id="GO:0000166">
    <property type="term" value="F:nucleotide binding"/>
    <property type="evidence" value="ECO:0007669"/>
    <property type="project" value="InterPro"/>
</dbReference>
<dbReference type="GO" id="GO:0019310">
    <property type="term" value="P:inositol catabolic process"/>
    <property type="evidence" value="ECO:0007669"/>
    <property type="project" value="UniProtKB-UniRule"/>
</dbReference>
<dbReference type="Gene3D" id="3.30.360.10">
    <property type="entry name" value="Dihydrodipicolinate Reductase, domain 2"/>
    <property type="match status" value="1"/>
</dbReference>
<dbReference type="Gene3D" id="3.40.50.720">
    <property type="entry name" value="NAD(P)-binding Rossmann-like Domain"/>
    <property type="match status" value="1"/>
</dbReference>
<dbReference type="HAMAP" id="MF_01671">
    <property type="entry name" value="IolG"/>
    <property type="match status" value="1"/>
</dbReference>
<dbReference type="InterPro" id="IPR050424">
    <property type="entry name" value="Gfo-Idh-MocA_inositol_DH"/>
</dbReference>
<dbReference type="InterPro" id="IPR004104">
    <property type="entry name" value="Gfo/Idh/MocA-like_OxRdtase_C"/>
</dbReference>
<dbReference type="InterPro" id="IPR000683">
    <property type="entry name" value="Gfo/Idh/MocA-like_OxRdtase_N"/>
</dbReference>
<dbReference type="InterPro" id="IPR023794">
    <property type="entry name" value="MI/DCI_dehydrogenase"/>
</dbReference>
<dbReference type="InterPro" id="IPR036291">
    <property type="entry name" value="NAD(P)-bd_dom_sf"/>
</dbReference>
<dbReference type="PANTHER" id="PTHR43593">
    <property type="match status" value="1"/>
</dbReference>
<dbReference type="PANTHER" id="PTHR43593:SF1">
    <property type="entry name" value="INOSITOL 2-DEHYDROGENASE"/>
    <property type="match status" value="1"/>
</dbReference>
<dbReference type="Pfam" id="PF01408">
    <property type="entry name" value="GFO_IDH_MocA"/>
    <property type="match status" value="1"/>
</dbReference>
<dbReference type="Pfam" id="PF02894">
    <property type="entry name" value="GFO_IDH_MocA_C"/>
    <property type="match status" value="1"/>
</dbReference>
<dbReference type="SUPFAM" id="SSF55347">
    <property type="entry name" value="Glyceraldehyde-3-phosphate dehydrogenase-like, C-terminal domain"/>
    <property type="match status" value="1"/>
</dbReference>
<dbReference type="SUPFAM" id="SSF51735">
    <property type="entry name" value="NAD(P)-binding Rossmann-fold domains"/>
    <property type="match status" value="1"/>
</dbReference>
<keyword id="KW-0520">NAD</keyword>
<keyword id="KW-0560">Oxidoreductase</keyword>
<keyword id="KW-1185">Reference proteome</keyword>
<protein>
    <recommendedName>
        <fullName evidence="1">Inositol 2-dehydrogenase</fullName>
        <ecNumber evidence="1">1.1.1.18</ecNumber>
    </recommendedName>
    <alternativeName>
        <fullName evidence="1">Myo-inositol 2-dehydrogenase</fullName>
        <shortName evidence="1">MI 2-dehydrogenase</shortName>
    </alternativeName>
</protein>
<name>IOLG_ARTS2</name>
<reference key="1">
    <citation type="journal article" date="2013" name="Stand. Genomic Sci.">
        <title>Complete genome sequence of Arthrobacter sp. strain FB24.</title>
        <authorList>
            <person name="Nakatsu C.H."/>
            <person name="Barabote R."/>
            <person name="Thompson S."/>
            <person name="Bruce D."/>
            <person name="Detter C."/>
            <person name="Brettin T."/>
            <person name="Han C."/>
            <person name="Beasley F."/>
            <person name="Chen W."/>
            <person name="Konopka A."/>
            <person name="Xie G."/>
        </authorList>
    </citation>
    <scope>NUCLEOTIDE SEQUENCE [LARGE SCALE GENOMIC DNA]</scope>
    <source>
        <strain>FB24</strain>
    </source>
</reference>
<sequence>MTETLRVAVIGAGRMGADHIQRLSKRIHGAEVAAVVDVDLARAQAAVEGIPGAVALADADEALNNGDVNAVLIATPGFLHEDILLKALARDIPILCEKPLTPDAESAWKIVQAEEKLGHKRIQVGFMRRFDAEYAALGQVIRDHELGELLMLHHQHRNPTTPPGFTNEMLINDSVVHEFDAIRFFTGEEITSVQVRLGKATKNAPAGQHDPQHVLVETESGVLADVEIFVNAKFGYEVATQASFEDGIVSIGGDKGPYTRAAGRWGGNVTPGFEERFGAAYDVEIQSWVDAALRGEIGGPTAWDGYATAACCEAGVEAQKNGEKVAVKLNARPALYS</sequence>